<gene>
    <name evidence="1" type="primary">ftsB</name>
    <name type="ordered locus">SG0525</name>
</gene>
<accession>Q2NVM5</accession>
<sequence length="105" mass="11688">MGKLTLLLLVLLGWLQYSLWLGKNGVHDLVRVESDVAAQQSNNAQLKARNDQLFAEIDDLNGGQGAIEERSRNELGMIKPGETFYRLVPEQSKRQPAAPATQDNQ</sequence>
<reference key="1">
    <citation type="journal article" date="2006" name="Genome Res.">
        <title>Massive genome erosion and functional adaptations provide insights into the symbiotic lifestyle of Sodalis glossinidius in the tsetse host.</title>
        <authorList>
            <person name="Toh H."/>
            <person name="Weiss B.L."/>
            <person name="Perkin S.A.H."/>
            <person name="Yamashita A."/>
            <person name="Oshima K."/>
            <person name="Hattori M."/>
            <person name="Aksoy S."/>
        </authorList>
    </citation>
    <scope>NUCLEOTIDE SEQUENCE [LARGE SCALE GENOMIC DNA]</scope>
    <source>
        <strain>morsitans</strain>
    </source>
</reference>
<protein>
    <recommendedName>
        <fullName evidence="1">Cell division protein FtsB</fullName>
    </recommendedName>
</protein>
<proteinExistence type="inferred from homology"/>
<dbReference type="EMBL" id="AP008232">
    <property type="protein sequence ID" value="BAE73800.1"/>
    <property type="molecule type" value="Genomic_DNA"/>
</dbReference>
<dbReference type="RefSeq" id="WP_011410498.1">
    <property type="nucleotide sequence ID" value="NC_007712.1"/>
</dbReference>
<dbReference type="SMR" id="Q2NVM5"/>
<dbReference type="STRING" id="343509.SG0525"/>
<dbReference type="KEGG" id="sgl:SG0525"/>
<dbReference type="eggNOG" id="COG2919">
    <property type="taxonomic scope" value="Bacteria"/>
</dbReference>
<dbReference type="HOGENOM" id="CLU_134863_5_2_6"/>
<dbReference type="OrthoDB" id="7061211at2"/>
<dbReference type="BioCyc" id="SGLO343509:SGP1_RS04645-MONOMER"/>
<dbReference type="Proteomes" id="UP000001932">
    <property type="component" value="Chromosome"/>
</dbReference>
<dbReference type="GO" id="GO:0032153">
    <property type="term" value="C:cell division site"/>
    <property type="evidence" value="ECO:0007669"/>
    <property type="project" value="UniProtKB-UniRule"/>
</dbReference>
<dbReference type="GO" id="GO:0030428">
    <property type="term" value="C:cell septum"/>
    <property type="evidence" value="ECO:0007669"/>
    <property type="project" value="TreeGrafter"/>
</dbReference>
<dbReference type="GO" id="GO:0005886">
    <property type="term" value="C:plasma membrane"/>
    <property type="evidence" value="ECO:0007669"/>
    <property type="project" value="UniProtKB-SubCell"/>
</dbReference>
<dbReference type="GO" id="GO:0043093">
    <property type="term" value="P:FtsZ-dependent cytokinesis"/>
    <property type="evidence" value="ECO:0007669"/>
    <property type="project" value="UniProtKB-UniRule"/>
</dbReference>
<dbReference type="Gene3D" id="1.20.5.400">
    <property type="match status" value="1"/>
</dbReference>
<dbReference type="HAMAP" id="MF_00599">
    <property type="entry name" value="FtsB"/>
    <property type="match status" value="1"/>
</dbReference>
<dbReference type="InterPro" id="IPR023081">
    <property type="entry name" value="Cell_div_FtsB"/>
</dbReference>
<dbReference type="InterPro" id="IPR007060">
    <property type="entry name" value="FtsL/DivIC"/>
</dbReference>
<dbReference type="NCBIfam" id="NF002058">
    <property type="entry name" value="PRK00888.1"/>
    <property type="match status" value="1"/>
</dbReference>
<dbReference type="PANTHER" id="PTHR37485">
    <property type="entry name" value="CELL DIVISION PROTEIN FTSB"/>
    <property type="match status" value="1"/>
</dbReference>
<dbReference type="PANTHER" id="PTHR37485:SF1">
    <property type="entry name" value="CELL DIVISION PROTEIN FTSB"/>
    <property type="match status" value="1"/>
</dbReference>
<dbReference type="Pfam" id="PF04977">
    <property type="entry name" value="DivIC"/>
    <property type="match status" value="1"/>
</dbReference>
<name>FTSB_SODGM</name>
<organism>
    <name type="scientific">Sodalis glossinidius (strain morsitans)</name>
    <dbReference type="NCBI Taxonomy" id="343509"/>
    <lineage>
        <taxon>Bacteria</taxon>
        <taxon>Pseudomonadati</taxon>
        <taxon>Pseudomonadota</taxon>
        <taxon>Gammaproteobacteria</taxon>
        <taxon>Enterobacterales</taxon>
        <taxon>Bruguierivoracaceae</taxon>
        <taxon>Sodalis</taxon>
    </lineage>
</organism>
<evidence type="ECO:0000255" key="1">
    <source>
        <dbReference type="HAMAP-Rule" id="MF_00599"/>
    </source>
</evidence>
<keyword id="KW-0131">Cell cycle</keyword>
<keyword id="KW-0132">Cell division</keyword>
<keyword id="KW-0997">Cell inner membrane</keyword>
<keyword id="KW-1003">Cell membrane</keyword>
<keyword id="KW-0175">Coiled coil</keyword>
<keyword id="KW-0472">Membrane</keyword>
<keyword id="KW-0812">Transmembrane</keyword>
<keyword id="KW-1133">Transmembrane helix</keyword>
<feature type="chain" id="PRO_1000025732" description="Cell division protein FtsB">
    <location>
        <begin position="1"/>
        <end position="105"/>
    </location>
</feature>
<feature type="topological domain" description="Cytoplasmic" evidence="1">
    <location>
        <begin position="1"/>
        <end position="3"/>
    </location>
</feature>
<feature type="transmembrane region" description="Helical" evidence="1">
    <location>
        <begin position="4"/>
        <end position="21"/>
    </location>
</feature>
<feature type="topological domain" description="Periplasmic" evidence="1">
    <location>
        <begin position="22"/>
        <end position="105"/>
    </location>
</feature>
<feature type="coiled-coil region" evidence="1">
    <location>
        <begin position="28"/>
        <end position="62"/>
    </location>
</feature>
<comment type="function">
    <text evidence="1">Essential cell division protein. May link together the upstream cell division proteins, which are predominantly cytoplasmic, with the downstream cell division proteins, which are predominantly periplasmic.</text>
</comment>
<comment type="subunit">
    <text evidence="1">Part of a complex composed of FtsB, FtsL and FtsQ.</text>
</comment>
<comment type="subcellular location">
    <subcellularLocation>
        <location evidence="1">Cell inner membrane</location>
        <topology evidence="1">Single-pass type II membrane protein</topology>
    </subcellularLocation>
    <text evidence="1">Localizes to the division septum.</text>
</comment>
<comment type="similarity">
    <text evidence="1">Belongs to the FtsB family.</text>
</comment>